<keyword id="KW-0687">Ribonucleoprotein</keyword>
<keyword id="KW-0689">Ribosomal protein</keyword>
<keyword id="KW-0694">RNA-binding</keyword>
<keyword id="KW-0699">rRNA-binding</keyword>
<protein>
    <recommendedName>
        <fullName evidence="1">Small ribosomal subunit protein uS11</fullName>
    </recommendedName>
    <alternativeName>
        <fullName evidence="2">30S ribosomal protein S11</fullName>
    </alternativeName>
</protein>
<evidence type="ECO:0000255" key="1">
    <source>
        <dbReference type="HAMAP-Rule" id="MF_01310"/>
    </source>
</evidence>
<evidence type="ECO:0000305" key="2"/>
<accession>A0ALU3</accession>
<gene>
    <name evidence="1" type="primary">rpsK</name>
    <name type="ordered locus">lwe2557</name>
</gene>
<name>RS11_LISW6</name>
<feature type="chain" id="PRO_0000294785" description="Small ribosomal subunit protein uS11">
    <location>
        <begin position="1"/>
        <end position="129"/>
    </location>
</feature>
<proteinExistence type="inferred from homology"/>
<sequence length="129" mass="13786">MARKTNTRKRRVKKNIESGIAHIRSTFNNTIVMITDTHGNALAWSSAGSLGFKGSRKSTPFAAQMAAESAAKSAQEHGLKTLEVTVKGPGSGREAAIRALQAAGLEVTAIKDVTPVPHNGCRPPKRRRV</sequence>
<dbReference type="EMBL" id="AM263198">
    <property type="protein sequence ID" value="CAK21975.1"/>
    <property type="molecule type" value="Genomic_DNA"/>
</dbReference>
<dbReference type="RefSeq" id="WP_003720926.1">
    <property type="nucleotide sequence ID" value="NC_008555.1"/>
</dbReference>
<dbReference type="SMR" id="A0ALU3"/>
<dbReference type="STRING" id="386043.lwe2557"/>
<dbReference type="GeneID" id="93240488"/>
<dbReference type="KEGG" id="lwe:lwe2557"/>
<dbReference type="eggNOG" id="COG0100">
    <property type="taxonomic scope" value="Bacteria"/>
</dbReference>
<dbReference type="HOGENOM" id="CLU_072439_5_0_9"/>
<dbReference type="OrthoDB" id="9806415at2"/>
<dbReference type="Proteomes" id="UP000000779">
    <property type="component" value="Chromosome"/>
</dbReference>
<dbReference type="GO" id="GO:1990904">
    <property type="term" value="C:ribonucleoprotein complex"/>
    <property type="evidence" value="ECO:0007669"/>
    <property type="project" value="UniProtKB-KW"/>
</dbReference>
<dbReference type="GO" id="GO:0005840">
    <property type="term" value="C:ribosome"/>
    <property type="evidence" value="ECO:0007669"/>
    <property type="project" value="UniProtKB-KW"/>
</dbReference>
<dbReference type="GO" id="GO:0019843">
    <property type="term" value="F:rRNA binding"/>
    <property type="evidence" value="ECO:0007669"/>
    <property type="project" value="UniProtKB-UniRule"/>
</dbReference>
<dbReference type="GO" id="GO:0003735">
    <property type="term" value="F:structural constituent of ribosome"/>
    <property type="evidence" value="ECO:0007669"/>
    <property type="project" value="InterPro"/>
</dbReference>
<dbReference type="GO" id="GO:0006412">
    <property type="term" value="P:translation"/>
    <property type="evidence" value="ECO:0007669"/>
    <property type="project" value="UniProtKB-UniRule"/>
</dbReference>
<dbReference type="FunFam" id="3.30.420.80:FF:000001">
    <property type="entry name" value="30S ribosomal protein S11"/>
    <property type="match status" value="1"/>
</dbReference>
<dbReference type="Gene3D" id="3.30.420.80">
    <property type="entry name" value="Ribosomal protein S11"/>
    <property type="match status" value="1"/>
</dbReference>
<dbReference type="HAMAP" id="MF_01310">
    <property type="entry name" value="Ribosomal_uS11"/>
    <property type="match status" value="1"/>
</dbReference>
<dbReference type="InterPro" id="IPR001971">
    <property type="entry name" value="Ribosomal_uS11"/>
</dbReference>
<dbReference type="InterPro" id="IPR019981">
    <property type="entry name" value="Ribosomal_uS11_bac-type"/>
</dbReference>
<dbReference type="InterPro" id="IPR018102">
    <property type="entry name" value="Ribosomal_uS11_CS"/>
</dbReference>
<dbReference type="InterPro" id="IPR036967">
    <property type="entry name" value="Ribosomal_uS11_sf"/>
</dbReference>
<dbReference type="NCBIfam" id="NF003698">
    <property type="entry name" value="PRK05309.1"/>
    <property type="match status" value="1"/>
</dbReference>
<dbReference type="NCBIfam" id="TIGR03632">
    <property type="entry name" value="uS11_bact"/>
    <property type="match status" value="1"/>
</dbReference>
<dbReference type="PANTHER" id="PTHR11759">
    <property type="entry name" value="40S RIBOSOMAL PROTEIN S14/30S RIBOSOMAL PROTEIN S11"/>
    <property type="match status" value="1"/>
</dbReference>
<dbReference type="Pfam" id="PF00411">
    <property type="entry name" value="Ribosomal_S11"/>
    <property type="match status" value="1"/>
</dbReference>
<dbReference type="PIRSF" id="PIRSF002131">
    <property type="entry name" value="Ribosomal_S11"/>
    <property type="match status" value="1"/>
</dbReference>
<dbReference type="SUPFAM" id="SSF53137">
    <property type="entry name" value="Translational machinery components"/>
    <property type="match status" value="1"/>
</dbReference>
<dbReference type="PROSITE" id="PS00054">
    <property type="entry name" value="RIBOSOMAL_S11"/>
    <property type="match status" value="1"/>
</dbReference>
<reference key="1">
    <citation type="journal article" date="2006" name="J. Bacteriol.">
        <title>Whole-genome sequence of Listeria welshimeri reveals common steps in genome reduction with Listeria innocua as compared to Listeria monocytogenes.</title>
        <authorList>
            <person name="Hain T."/>
            <person name="Steinweg C."/>
            <person name="Kuenne C.T."/>
            <person name="Billion A."/>
            <person name="Ghai R."/>
            <person name="Chatterjee S.S."/>
            <person name="Domann E."/>
            <person name="Kaerst U."/>
            <person name="Goesmann A."/>
            <person name="Bekel T."/>
            <person name="Bartels D."/>
            <person name="Kaiser O."/>
            <person name="Meyer F."/>
            <person name="Puehler A."/>
            <person name="Weisshaar B."/>
            <person name="Wehland J."/>
            <person name="Liang C."/>
            <person name="Dandekar T."/>
            <person name="Lampidis R."/>
            <person name="Kreft J."/>
            <person name="Goebel W."/>
            <person name="Chakraborty T."/>
        </authorList>
    </citation>
    <scope>NUCLEOTIDE SEQUENCE [LARGE SCALE GENOMIC DNA]</scope>
    <source>
        <strain>ATCC 35897 / DSM 20650 / CCUG 15529 / CIP 8149 / NCTC 11857 / SLCC 5334 / V8</strain>
    </source>
</reference>
<organism>
    <name type="scientific">Listeria welshimeri serovar 6b (strain ATCC 35897 / DSM 20650 / CCUG 15529 / CIP 8149 / NCTC 11857 / SLCC 5334 / V8)</name>
    <dbReference type="NCBI Taxonomy" id="386043"/>
    <lineage>
        <taxon>Bacteria</taxon>
        <taxon>Bacillati</taxon>
        <taxon>Bacillota</taxon>
        <taxon>Bacilli</taxon>
        <taxon>Bacillales</taxon>
        <taxon>Listeriaceae</taxon>
        <taxon>Listeria</taxon>
    </lineage>
</organism>
<comment type="function">
    <text evidence="1">Located on the platform of the 30S subunit, it bridges several disparate RNA helices of the 16S rRNA. Forms part of the Shine-Dalgarno cleft in the 70S ribosome.</text>
</comment>
<comment type="subunit">
    <text evidence="1">Part of the 30S ribosomal subunit. Interacts with proteins S7 and S18. Binds to IF-3.</text>
</comment>
<comment type="similarity">
    <text evidence="1">Belongs to the universal ribosomal protein uS11 family.</text>
</comment>